<protein>
    <recommendedName>
        <fullName evidence="1">Glutamyl-tRNA reductase</fullName>
        <shortName evidence="1">GluTR</shortName>
        <ecNumber evidence="1">1.2.1.70</ecNumber>
    </recommendedName>
</protein>
<evidence type="ECO:0000255" key="1">
    <source>
        <dbReference type="HAMAP-Rule" id="MF_00087"/>
    </source>
</evidence>
<evidence type="ECO:0000256" key="2">
    <source>
        <dbReference type="SAM" id="MobiDB-lite"/>
    </source>
</evidence>
<organism>
    <name type="scientific">Archaeoglobus fulgidus (strain ATCC 49558 / DSM 4304 / JCM 9628 / NBRC 100126 / VC-16)</name>
    <dbReference type="NCBI Taxonomy" id="224325"/>
    <lineage>
        <taxon>Archaea</taxon>
        <taxon>Methanobacteriati</taxon>
        <taxon>Methanobacteriota</taxon>
        <taxon>Archaeoglobi</taxon>
        <taxon>Archaeoglobales</taxon>
        <taxon>Archaeoglobaceae</taxon>
        <taxon>Archaeoglobus</taxon>
    </lineage>
</organism>
<keyword id="KW-0521">NADP</keyword>
<keyword id="KW-0560">Oxidoreductase</keyword>
<keyword id="KW-0627">Porphyrin biosynthesis</keyword>
<keyword id="KW-1185">Reference proteome</keyword>
<comment type="function">
    <text evidence="1">Catalyzes the NADPH-dependent reduction of glutamyl-tRNA(Glu) to glutamate 1-semialdehyde (GSA).</text>
</comment>
<comment type="catalytic activity">
    <reaction evidence="1">
        <text>(S)-4-amino-5-oxopentanoate + tRNA(Glu) + NADP(+) = L-glutamyl-tRNA(Glu) + NADPH + H(+)</text>
        <dbReference type="Rhea" id="RHEA:12344"/>
        <dbReference type="Rhea" id="RHEA-COMP:9663"/>
        <dbReference type="Rhea" id="RHEA-COMP:9680"/>
        <dbReference type="ChEBI" id="CHEBI:15378"/>
        <dbReference type="ChEBI" id="CHEBI:57501"/>
        <dbReference type="ChEBI" id="CHEBI:57783"/>
        <dbReference type="ChEBI" id="CHEBI:58349"/>
        <dbReference type="ChEBI" id="CHEBI:78442"/>
        <dbReference type="ChEBI" id="CHEBI:78520"/>
        <dbReference type="EC" id="1.2.1.70"/>
    </reaction>
</comment>
<comment type="pathway">
    <text evidence="1">Porphyrin-containing compound metabolism; protoporphyrin-IX biosynthesis; 5-aminolevulinate from L-glutamyl-tRNA(Glu): step 1/2.</text>
</comment>
<comment type="subunit">
    <text evidence="1">Homodimer.</text>
</comment>
<comment type="domain">
    <text evidence="1">Possesses an unusual extended V-shaped dimeric structure with each monomer consisting of three distinct domains arranged along a curved 'spinal' alpha-helix. The N-terminal catalytic domain specifically recognizes the glutamate moiety of the substrate. The second domain is the NADPH-binding domain, and the third C-terminal domain is responsible for dimerization.</text>
</comment>
<comment type="miscellaneous">
    <text evidence="1">During catalysis, the active site Cys acts as a nucleophile attacking the alpha-carbonyl group of tRNA-bound glutamate with the formation of a thioester intermediate between enzyme and glutamate, and the concomitant release of tRNA(Glu). The thioester intermediate is finally reduced by direct hydride transfer from NADPH, to form the product GSA.</text>
</comment>
<comment type="similarity">
    <text evidence="1">Belongs to the glutamyl-tRNA reductase family.</text>
</comment>
<proteinExistence type="inferred from homology"/>
<sequence>MEIGCITISHKNAKVEEIEKIWLTVKPRLEDVISKCSFSEYAYIFTCNRFEIYLVGENLKSCLQDIAEELGITGKAEIFVGESCLRHLLRVASGIESMIVGEEQILGQVRQCFNLCREGGQAGEVLERVFGKAVQVGRRVRRETAISKGSVSIGSAAVEVAERVLGTLKGKKALLVGAGEMGTLVAKAIAGKEVEAVLIANRTYEKAEELAKRIGGVAVKFDKLVDYLKVCDVVISATSAPHAVITRGDVERAMRERSQKLLIIDIALPRDVDESVAQLDGVELLTIDDLRRISEENLARRREEIAKVEGIIEEELEQLKLLLKDISARDAIAAMYSLAERFVGEEVEELYAKLNARYGVSEDVKEILNDFANSLIKKFLREPTVRLREAARKDEFHVIESIKYVFGDGNGRVSEGKDAKVEEGKPEVDVQRSKAES</sequence>
<name>HEM1_ARCFU</name>
<accession>O28304</accession>
<dbReference type="EC" id="1.2.1.70" evidence="1"/>
<dbReference type="EMBL" id="AE000782">
    <property type="protein sequence ID" value="AAB89281.1"/>
    <property type="molecule type" value="Genomic_DNA"/>
</dbReference>
<dbReference type="PIR" id="F69496">
    <property type="entry name" value="F69496"/>
</dbReference>
<dbReference type="RefSeq" id="WP_010879467.1">
    <property type="nucleotide sequence ID" value="NC_000917.1"/>
</dbReference>
<dbReference type="SMR" id="O28304"/>
<dbReference type="STRING" id="224325.AF_1975"/>
<dbReference type="PaxDb" id="224325-AF_1975"/>
<dbReference type="EnsemblBacteria" id="AAB89281">
    <property type="protein sequence ID" value="AAB89281"/>
    <property type="gene ID" value="AF_1975"/>
</dbReference>
<dbReference type="GeneID" id="24795718"/>
<dbReference type="KEGG" id="afu:AF_1975"/>
<dbReference type="eggNOG" id="arCOG01036">
    <property type="taxonomic scope" value="Archaea"/>
</dbReference>
<dbReference type="HOGENOM" id="CLU_035113_0_0_2"/>
<dbReference type="OrthoDB" id="4562at2157"/>
<dbReference type="PhylomeDB" id="O28304"/>
<dbReference type="UniPathway" id="UPA00251">
    <property type="reaction ID" value="UER00316"/>
</dbReference>
<dbReference type="Proteomes" id="UP000002199">
    <property type="component" value="Chromosome"/>
</dbReference>
<dbReference type="GO" id="GO:0008883">
    <property type="term" value="F:glutamyl-tRNA reductase activity"/>
    <property type="evidence" value="ECO:0007669"/>
    <property type="project" value="UniProtKB-UniRule"/>
</dbReference>
<dbReference type="GO" id="GO:0050661">
    <property type="term" value="F:NADP binding"/>
    <property type="evidence" value="ECO:0007669"/>
    <property type="project" value="InterPro"/>
</dbReference>
<dbReference type="GO" id="GO:0019353">
    <property type="term" value="P:protoporphyrinogen IX biosynthetic process from glutamate"/>
    <property type="evidence" value="ECO:0007669"/>
    <property type="project" value="TreeGrafter"/>
</dbReference>
<dbReference type="CDD" id="cd05213">
    <property type="entry name" value="NAD_bind_Glutamyl_tRNA_reduct"/>
    <property type="match status" value="1"/>
</dbReference>
<dbReference type="FunFam" id="3.30.460.30:FF:000001">
    <property type="entry name" value="Glutamyl-tRNA reductase"/>
    <property type="match status" value="1"/>
</dbReference>
<dbReference type="FunFam" id="3.40.50.720:FF:000031">
    <property type="entry name" value="Glutamyl-tRNA reductase"/>
    <property type="match status" value="1"/>
</dbReference>
<dbReference type="Gene3D" id="3.30.460.30">
    <property type="entry name" value="Glutamyl-tRNA reductase, N-terminal domain"/>
    <property type="match status" value="1"/>
</dbReference>
<dbReference type="Gene3D" id="3.40.50.720">
    <property type="entry name" value="NAD(P)-binding Rossmann-like Domain"/>
    <property type="match status" value="1"/>
</dbReference>
<dbReference type="HAMAP" id="MF_00087">
    <property type="entry name" value="Glu_tRNA_reductase"/>
    <property type="match status" value="1"/>
</dbReference>
<dbReference type="InterPro" id="IPR000343">
    <property type="entry name" value="4pyrrol_synth_GluRdtase"/>
</dbReference>
<dbReference type="InterPro" id="IPR015896">
    <property type="entry name" value="4pyrrol_synth_GluRdtase_dimer"/>
</dbReference>
<dbReference type="InterPro" id="IPR015895">
    <property type="entry name" value="4pyrrol_synth_GluRdtase_N"/>
</dbReference>
<dbReference type="InterPro" id="IPR018214">
    <property type="entry name" value="GluRdtase_CS"/>
</dbReference>
<dbReference type="InterPro" id="IPR036453">
    <property type="entry name" value="GluRdtase_dimer_dom_sf"/>
</dbReference>
<dbReference type="InterPro" id="IPR036343">
    <property type="entry name" value="GluRdtase_N_sf"/>
</dbReference>
<dbReference type="InterPro" id="IPR036291">
    <property type="entry name" value="NAD(P)-bd_dom_sf"/>
</dbReference>
<dbReference type="InterPro" id="IPR006151">
    <property type="entry name" value="Shikm_DH/Glu-tRNA_Rdtase"/>
</dbReference>
<dbReference type="NCBIfam" id="TIGR01035">
    <property type="entry name" value="hemA"/>
    <property type="match status" value="1"/>
</dbReference>
<dbReference type="PANTHER" id="PTHR43013">
    <property type="entry name" value="GLUTAMYL-TRNA REDUCTASE"/>
    <property type="match status" value="1"/>
</dbReference>
<dbReference type="PANTHER" id="PTHR43013:SF1">
    <property type="entry name" value="GLUTAMYL-TRNA REDUCTASE"/>
    <property type="match status" value="1"/>
</dbReference>
<dbReference type="Pfam" id="PF00745">
    <property type="entry name" value="GlutR_dimer"/>
    <property type="match status" value="1"/>
</dbReference>
<dbReference type="Pfam" id="PF05201">
    <property type="entry name" value="GlutR_N"/>
    <property type="match status" value="1"/>
</dbReference>
<dbReference type="Pfam" id="PF01488">
    <property type="entry name" value="Shikimate_DH"/>
    <property type="match status" value="1"/>
</dbReference>
<dbReference type="PIRSF" id="PIRSF000445">
    <property type="entry name" value="4pyrrol_synth_GluRdtase"/>
    <property type="match status" value="1"/>
</dbReference>
<dbReference type="SUPFAM" id="SSF69742">
    <property type="entry name" value="Glutamyl tRNA-reductase catalytic, N-terminal domain"/>
    <property type="match status" value="1"/>
</dbReference>
<dbReference type="SUPFAM" id="SSF69075">
    <property type="entry name" value="Glutamyl tRNA-reductase dimerization domain"/>
    <property type="match status" value="1"/>
</dbReference>
<dbReference type="SUPFAM" id="SSF51735">
    <property type="entry name" value="NAD(P)-binding Rossmann-fold domains"/>
    <property type="match status" value="1"/>
</dbReference>
<dbReference type="PROSITE" id="PS00747">
    <property type="entry name" value="GLUTR"/>
    <property type="match status" value="1"/>
</dbReference>
<reference key="1">
    <citation type="journal article" date="1997" name="Nature">
        <title>The complete genome sequence of the hyperthermophilic, sulphate-reducing archaeon Archaeoglobus fulgidus.</title>
        <authorList>
            <person name="Klenk H.-P."/>
            <person name="Clayton R.A."/>
            <person name="Tomb J.-F."/>
            <person name="White O."/>
            <person name="Nelson K.E."/>
            <person name="Ketchum K.A."/>
            <person name="Dodson R.J."/>
            <person name="Gwinn M.L."/>
            <person name="Hickey E.K."/>
            <person name="Peterson J.D."/>
            <person name="Richardson D.L."/>
            <person name="Kerlavage A.R."/>
            <person name="Graham D.E."/>
            <person name="Kyrpides N.C."/>
            <person name="Fleischmann R.D."/>
            <person name="Quackenbush J."/>
            <person name="Lee N.H."/>
            <person name="Sutton G.G."/>
            <person name="Gill S.R."/>
            <person name="Kirkness E.F."/>
            <person name="Dougherty B.A."/>
            <person name="McKenney K."/>
            <person name="Adams M.D."/>
            <person name="Loftus B.J."/>
            <person name="Peterson S.N."/>
            <person name="Reich C.I."/>
            <person name="McNeil L.K."/>
            <person name="Badger J.H."/>
            <person name="Glodek A."/>
            <person name="Zhou L."/>
            <person name="Overbeek R."/>
            <person name="Gocayne J.D."/>
            <person name="Weidman J.F."/>
            <person name="McDonald L.A."/>
            <person name="Utterback T.R."/>
            <person name="Cotton M.D."/>
            <person name="Spriggs T."/>
            <person name="Artiach P."/>
            <person name="Kaine B.P."/>
            <person name="Sykes S.M."/>
            <person name="Sadow P.W."/>
            <person name="D'Andrea K.P."/>
            <person name="Bowman C."/>
            <person name="Fujii C."/>
            <person name="Garland S.A."/>
            <person name="Mason T.M."/>
            <person name="Olsen G.J."/>
            <person name="Fraser C.M."/>
            <person name="Smith H.O."/>
            <person name="Woese C.R."/>
            <person name="Venter J.C."/>
        </authorList>
    </citation>
    <scope>NUCLEOTIDE SEQUENCE [LARGE SCALE GENOMIC DNA]</scope>
    <source>
        <strain>ATCC 49558 / DSM 4304 / JCM 9628 / NBRC 100126 / VC-16</strain>
    </source>
</reference>
<gene>
    <name evidence="1" type="primary">hemA</name>
    <name type="ordered locus">AF_1975</name>
</gene>
<feature type="chain" id="PRO_0000114098" description="Glutamyl-tRNA reductase">
    <location>
        <begin position="1"/>
        <end position="437"/>
    </location>
</feature>
<feature type="region of interest" description="Disordered" evidence="2">
    <location>
        <begin position="410"/>
        <end position="437"/>
    </location>
</feature>
<feature type="compositionally biased region" description="Basic and acidic residues" evidence="2">
    <location>
        <begin position="414"/>
        <end position="437"/>
    </location>
</feature>
<feature type="active site" description="Nucleophile" evidence="1">
    <location>
        <position position="47"/>
    </location>
</feature>
<feature type="binding site" evidence="1">
    <location>
        <begin position="46"/>
        <end position="49"/>
    </location>
    <ligand>
        <name>substrate</name>
    </ligand>
</feature>
<feature type="binding site" evidence="1">
    <location>
        <position position="97"/>
    </location>
    <ligand>
        <name>substrate</name>
    </ligand>
</feature>
<feature type="binding site" evidence="1">
    <location>
        <begin position="102"/>
        <end position="104"/>
    </location>
    <ligand>
        <name>substrate</name>
    </ligand>
</feature>
<feature type="binding site" evidence="1">
    <location>
        <position position="108"/>
    </location>
    <ligand>
        <name>substrate</name>
    </ligand>
</feature>
<feature type="binding site" evidence="1">
    <location>
        <begin position="177"/>
        <end position="182"/>
    </location>
    <ligand>
        <name>NADP(+)</name>
        <dbReference type="ChEBI" id="CHEBI:58349"/>
    </ligand>
</feature>
<feature type="site" description="Important for activity" evidence="1">
    <location>
        <position position="87"/>
    </location>
</feature>